<evidence type="ECO:0000250" key="1">
    <source>
        <dbReference type="UniProtKB" id="P0ADP7"/>
    </source>
</evidence>
<evidence type="ECO:0000255" key="2">
    <source>
        <dbReference type="HAMAP-Rule" id="MF_02215"/>
    </source>
</evidence>
<evidence type="ECO:0000269" key="3">
    <source>
    </source>
</evidence>
<evidence type="ECO:0000303" key="4">
    <source>
    </source>
</evidence>
<evidence type="ECO:0000305" key="5"/>
<evidence type="ECO:0000312" key="6">
    <source>
        <dbReference type="EMBL" id="AAL22815.1"/>
    </source>
</evidence>
<protein>
    <recommendedName>
        <fullName evidence="2">Ubiquinone biosynthesis accessory factor UbiJ</fullName>
    </recommendedName>
</protein>
<reference key="1">
    <citation type="journal article" date="2001" name="Nature">
        <title>Complete genome sequence of Salmonella enterica serovar Typhimurium LT2.</title>
        <authorList>
            <person name="McClelland M."/>
            <person name="Sanderson K.E."/>
            <person name="Spieth J."/>
            <person name="Clifton S.W."/>
            <person name="Latreille P."/>
            <person name="Courtney L."/>
            <person name="Porwollik S."/>
            <person name="Ali J."/>
            <person name="Dante M."/>
            <person name="Du F."/>
            <person name="Hou S."/>
            <person name="Layman D."/>
            <person name="Leonard S."/>
            <person name="Nguyen C."/>
            <person name="Scott K."/>
            <person name="Holmes A."/>
            <person name="Grewal N."/>
            <person name="Mulvaney E."/>
            <person name="Ryan E."/>
            <person name="Sun H."/>
            <person name="Florea L."/>
            <person name="Miller W."/>
            <person name="Stoneking T."/>
            <person name="Nhan M."/>
            <person name="Waterston R."/>
            <person name="Wilson R.K."/>
        </authorList>
    </citation>
    <scope>NUCLEOTIDE SEQUENCE [LARGE SCALE GENOMIC DNA]</scope>
    <source>
        <strain>LT2 / SGSC1412 / ATCC 700720</strain>
    </source>
</reference>
<reference key="2">
    <citation type="journal article" date="2014" name="J. Bacteriol.">
        <title>ubiJ, a new gene required for aerobic growth and proliferation in macrophage, is involved in coenzyme Q biosynthesis in Escherichia coli and Salmonella enterica serovar Typhimurium.</title>
        <authorList>
            <person name="Aussel L."/>
            <person name="Loiseau L."/>
            <person name="Hajj Chehade M."/>
            <person name="Pocachard B."/>
            <person name="Fontecave M."/>
            <person name="Pierrel F."/>
            <person name="Barras F."/>
        </authorList>
    </citation>
    <scope>FUNCTION</scope>
    <scope>PATHWAY</scope>
    <scope>DISRUPTION PHENOTYPE</scope>
    <source>
        <strain>ATCC 14028 / SGSC 2980 / CDC 6516-60 / NCTC 12023</strain>
    </source>
</reference>
<organism>
    <name type="scientific">Salmonella typhimurium (strain LT2 / SGSC1412 / ATCC 700720)</name>
    <dbReference type="NCBI Taxonomy" id="99287"/>
    <lineage>
        <taxon>Bacteria</taxon>
        <taxon>Pseudomonadati</taxon>
        <taxon>Pseudomonadota</taxon>
        <taxon>Gammaproteobacteria</taxon>
        <taxon>Enterobacterales</taxon>
        <taxon>Enterobacteriaceae</taxon>
        <taxon>Salmonella</taxon>
    </lineage>
</organism>
<name>UBIJ_SALTY</name>
<sequence length="201" mass="22143">MPFKPLVTAGIEGLLNTFLYRSPALKSARTRLQGKVLCVKLKGFSMPLVLVFSERQVDVLGAWEGEADCTVITQASVLPKLRDRQQLATLIRSGELEVQGDIQVVQNFVALADLAEFDPAELLAPYTGDIAAESIGKVVRGGAKFLRHGFQRQQRYAAEAITEEWRMAPGPLEVAWFAEETAAVERAVDSLTTRLEKLEAK</sequence>
<comment type="function">
    <text evidence="1 3">Required for ubiquinone (coenzyme Q) biosynthesis under aerobic conditions (PubMed:24142253). Binds hydrophobic ubiquinone biosynthetic intermediates via its SCP2 domain and is essential for the stability of the Ubi complex (By similarity). May constitute a docking platform where Ubi enzymes assemble and access their SCP2-bound polyprenyl substrates (By similarity). Required for intracellular proliferation in macrophages (PubMed:24142253).</text>
</comment>
<comment type="pathway">
    <text evidence="2 3">Cofactor biosynthesis; ubiquinone biosynthesis.</text>
</comment>
<comment type="subcellular location">
    <subcellularLocation>
        <location evidence="2">Cytoplasm</location>
    </subcellularLocation>
</comment>
<comment type="disruption phenotype">
    <text evidence="3">During aerobic growth, mutant is impaired for ubiquinone biosynthesis and for growth in rich medium, but it does not present any defect under anaerobic conditions. Mutant is also impaired for Salmonella intracellular proliferation in macrophages.</text>
</comment>
<comment type="similarity">
    <text evidence="2 5">Belongs to the UbiJ family.</text>
</comment>
<feature type="chain" id="PRO_0000431477" description="Ubiquinone biosynthesis accessory factor UbiJ">
    <location>
        <begin position="1"/>
        <end position="201"/>
    </location>
</feature>
<feature type="domain" description="SCP2" evidence="2">
    <location>
        <begin position="15"/>
        <end position="112"/>
    </location>
</feature>
<gene>
    <name evidence="2 4" type="primary">ubiJ</name>
    <name evidence="6" type="synonym">yigP</name>
    <name evidence="6" type="ordered locus">STM3971</name>
</gene>
<dbReference type="EMBL" id="AF233324">
    <property type="protein sequence ID" value="AAF33421.1"/>
    <property type="molecule type" value="Genomic_DNA"/>
</dbReference>
<dbReference type="EMBL" id="AE006468">
    <property type="protein sequence ID" value="AAL22815.1"/>
    <property type="molecule type" value="Genomic_DNA"/>
</dbReference>
<dbReference type="RefSeq" id="NP_462856.1">
    <property type="nucleotide sequence ID" value="NC_003197.2"/>
</dbReference>
<dbReference type="RefSeq" id="WP_001116086.1">
    <property type="nucleotide sequence ID" value="NC_003197.2"/>
</dbReference>
<dbReference type="SMR" id="Q9L6M5"/>
<dbReference type="STRING" id="99287.STM3971"/>
<dbReference type="PaxDb" id="99287-STM3971"/>
<dbReference type="DNASU" id="1255497"/>
<dbReference type="GeneID" id="1255497"/>
<dbReference type="KEGG" id="stm:STM3971"/>
<dbReference type="PATRIC" id="fig|99287.12.peg.4190"/>
<dbReference type="HOGENOM" id="CLU_100130_2_0_6"/>
<dbReference type="OMA" id="ELDWEYE"/>
<dbReference type="PhylomeDB" id="Q9L6M5"/>
<dbReference type="BioCyc" id="SENT99287:STM3971-MONOMER"/>
<dbReference type="UniPathway" id="UPA00232"/>
<dbReference type="Proteomes" id="UP000001014">
    <property type="component" value="Chromosome"/>
</dbReference>
<dbReference type="GO" id="GO:0005737">
    <property type="term" value="C:cytoplasm"/>
    <property type="evidence" value="ECO:0007669"/>
    <property type="project" value="UniProtKB-SubCell"/>
</dbReference>
<dbReference type="GO" id="GO:0006744">
    <property type="term" value="P:ubiquinone biosynthetic process"/>
    <property type="evidence" value="ECO:0007669"/>
    <property type="project" value="UniProtKB-UniRule"/>
</dbReference>
<dbReference type="HAMAP" id="MF_02215">
    <property type="entry name" value="UbiJ"/>
    <property type="match status" value="1"/>
</dbReference>
<dbReference type="InterPro" id="IPR003033">
    <property type="entry name" value="SCP2_sterol-bd_dom"/>
</dbReference>
<dbReference type="InterPro" id="IPR036527">
    <property type="entry name" value="SCP2_sterol-bd_dom_sf"/>
</dbReference>
<dbReference type="InterPro" id="IPR038989">
    <property type="entry name" value="UbiJ"/>
</dbReference>
<dbReference type="PANTHER" id="PTHR38693:SF1">
    <property type="entry name" value="UBIQUINONE BIOSYNTHESIS ACCESSORY FACTOR UBIJ"/>
    <property type="match status" value="1"/>
</dbReference>
<dbReference type="PANTHER" id="PTHR38693">
    <property type="entry name" value="UBIQUINONE BIOSYNTHESIS PROTEIN UBIJ"/>
    <property type="match status" value="1"/>
</dbReference>
<dbReference type="Pfam" id="PF02036">
    <property type="entry name" value="SCP2"/>
    <property type="match status" value="1"/>
</dbReference>
<dbReference type="SUPFAM" id="SSF55718">
    <property type="entry name" value="SCP-like"/>
    <property type="match status" value="1"/>
</dbReference>
<accession>Q9L6M5</accession>
<accession>Q7BM08</accession>
<keyword id="KW-0963">Cytoplasm</keyword>
<keyword id="KW-1185">Reference proteome</keyword>
<keyword id="KW-0831">Ubiquinone biosynthesis</keyword>
<proteinExistence type="inferred from homology"/>